<evidence type="ECO:0000250" key="1">
    <source>
        <dbReference type="UniProtKB" id="A8Q2D1"/>
    </source>
</evidence>
<evidence type="ECO:0000250" key="2">
    <source>
        <dbReference type="UniProtKB" id="P07584"/>
    </source>
</evidence>
<evidence type="ECO:0000255" key="3"/>
<evidence type="ECO:0000255" key="4">
    <source>
        <dbReference type="PROSITE-ProRule" id="PRU01005"/>
    </source>
</evidence>
<evidence type="ECO:0000255" key="5">
    <source>
        <dbReference type="PROSITE-ProRule" id="PRU01211"/>
    </source>
</evidence>
<evidence type="ECO:0000256" key="6">
    <source>
        <dbReference type="SAM" id="MobiDB-lite"/>
    </source>
</evidence>
<evidence type="ECO:0000269" key="7">
    <source>
    </source>
</evidence>
<evidence type="ECO:0000305" key="8"/>
<comment type="function">
    <text evidence="2">Metalloprotease.</text>
</comment>
<comment type="cofactor">
    <cofactor evidence="5">
        <name>Zn(2+)</name>
        <dbReference type="ChEBI" id="CHEBI:29105"/>
    </cofactor>
    <text evidence="5">Binds 1 zinc ion per subunit.</text>
</comment>
<comment type="subcellular location">
    <subcellularLocation>
        <location evidence="8">Secreted</location>
    </subcellularLocation>
</comment>
<comment type="tissue specificity">
    <text evidence="7">Expressed in pharyngeal muscles and mc cells.</text>
</comment>
<organism>
    <name type="scientific">Caenorhabditis elegans</name>
    <dbReference type="NCBI Taxonomy" id="6239"/>
    <lineage>
        <taxon>Eukaryota</taxon>
        <taxon>Metazoa</taxon>
        <taxon>Ecdysozoa</taxon>
        <taxon>Nematoda</taxon>
        <taxon>Chromadorea</taxon>
        <taxon>Rhabditida</taxon>
        <taxon>Rhabditina</taxon>
        <taxon>Rhabditomorpha</taxon>
        <taxon>Rhabditoidea</taxon>
        <taxon>Rhabditidae</taxon>
        <taxon>Peloderinae</taxon>
        <taxon>Caenorhabditis</taxon>
    </lineage>
</organism>
<name>NAS14_CAEEL</name>
<proteinExistence type="evidence at transcript level"/>
<feature type="signal peptide" evidence="3">
    <location>
        <begin position="1"/>
        <end position="25"/>
    </location>
</feature>
<feature type="propeptide" id="PRO_0000442661" evidence="8">
    <location>
        <begin position="26"/>
        <end status="unknown"/>
    </location>
</feature>
<feature type="chain" id="PRO_0000028918" description="Zinc metalloproteinase nas-14">
    <location>
        <begin status="unknown"/>
        <end position="503"/>
    </location>
</feature>
<feature type="domain" description="Peptidase M12A" evidence="5">
    <location>
        <begin position="116"/>
        <end position="312"/>
    </location>
</feature>
<feature type="domain" description="ShKT 1" evidence="4">
    <location>
        <begin position="380"/>
        <end position="414"/>
    </location>
</feature>
<feature type="domain" description="ShKT 2" evidence="4">
    <location>
        <begin position="469"/>
        <end position="503"/>
    </location>
</feature>
<feature type="region of interest" description="Disordered" evidence="6">
    <location>
        <begin position="317"/>
        <end position="377"/>
    </location>
</feature>
<feature type="region of interest" description="Disordered" evidence="6">
    <location>
        <begin position="422"/>
        <end position="464"/>
    </location>
</feature>
<feature type="compositionally biased region" description="Low complexity" evidence="6">
    <location>
        <begin position="317"/>
        <end position="340"/>
    </location>
</feature>
<feature type="compositionally biased region" description="Basic and acidic residues" evidence="6">
    <location>
        <begin position="342"/>
        <end position="351"/>
    </location>
</feature>
<feature type="compositionally biased region" description="Low complexity" evidence="6">
    <location>
        <begin position="352"/>
        <end position="370"/>
    </location>
</feature>
<feature type="compositionally biased region" description="Low complexity" evidence="6">
    <location>
        <begin position="439"/>
        <end position="464"/>
    </location>
</feature>
<feature type="active site" evidence="5">
    <location>
        <position position="211"/>
    </location>
</feature>
<feature type="binding site" evidence="5">
    <location>
        <position position="210"/>
    </location>
    <ligand>
        <name>Zn(2+)</name>
        <dbReference type="ChEBI" id="CHEBI:29105"/>
        <note>catalytic</note>
    </ligand>
</feature>
<feature type="binding site" evidence="5">
    <location>
        <position position="214"/>
    </location>
    <ligand>
        <name>Zn(2+)</name>
        <dbReference type="ChEBI" id="CHEBI:29105"/>
        <note>catalytic</note>
    </ligand>
</feature>
<feature type="binding site" evidence="5">
    <location>
        <position position="220"/>
    </location>
    <ligand>
        <name>Zn(2+)</name>
        <dbReference type="ChEBI" id="CHEBI:29105"/>
        <note>catalytic</note>
    </ligand>
</feature>
<feature type="glycosylation site" description="N-linked (GlcNAc...) asparagine" evidence="3">
    <location>
        <position position="192"/>
    </location>
</feature>
<feature type="glycosylation site" description="N-linked (GlcNAc...) asparagine" evidence="3">
    <location>
        <position position="437"/>
    </location>
</feature>
<feature type="disulfide bond" evidence="5">
    <location>
        <begin position="158"/>
        <end position="311"/>
    </location>
</feature>
<feature type="disulfide bond" evidence="5">
    <location>
        <begin position="182"/>
        <end position="202"/>
    </location>
</feature>
<feature type="disulfide bond" evidence="4">
    <location>
        <begin position="380"/>
        <end position="414"/>
    </location>
</feature>
<feature type="disulfide bond" evidence="4">
    <location>
        <begin position="387"/>
        <end position="407"/>
    </location>
</feature>
<feature type="disulfide bond" evidence="4">
    <location>
        <begin position="396"/>
        <end position="411"/>
    </location>
</feature>
<feature type="disulfide bond" evidence="4">
    <location>
        <begin position="469"/>
        <end position="503"/>
    </location>
</feature>
<feature type="disulfide bond" evidence="4">
    <location>
        <begin position="476"/>
        <end position="496"/>
    </location>
</feature>
<feature type="disulfide bond" evidence="4">
    <location>
        <begin position="485"/>
        <end position="500"/>
    </location>
</feature>
<accession>Q19269</accession>
<accession>Q7Z0N2</accession>
<dbReference type="EC" id="3.4.24.-" evidence="1"/>
<dbReference type="EMBL" id="Z73896">
    <property type="protein sequence ID" value="CAA98057.2"/>
    <property type="molecule type" value="Genomic_DNA"/>
</dbReference>
<dbReference type="EMBL" id="AJ561207">
    <property type="protein sequence ID" value="CAD99209.1"/>
    <property type="molecule type" value="mRNA"/>
</dbReference>
<dbReference type="PIR" id="T20658">
    <property type="entry name" value="T20658"/>
</dbReference>
<dbReference type="RefSeq" id="NP_502533.2">
    <property type="nucleotide sequence ID" value="NM_070132.4"/>
</dbReference>
<dbReference type="SMR" id="Q19269"/>
<dbReference type="STRING" id="6239.F09E8.6.1"/>
<dbReference type="MEROPS" id="M12.A23"/>
<dbReference type="GlyCosmos" id="Q19269">
    <property type="glycosylation" value="2 sites, No reported glycans"/>
</dbReference>
<dbReference type="PaxDb" id="6239-F09E8.6"/>
<dbReference type="PeptideAtlas" id="Q19269"/>
<dbReference type="EnsemblMetazoa" id="F09E8.6.1">
    <property type="protein sequence ID" value="F09E8.6.1"/>
    <property type="gene ID" value="WBGene00003533"/>
</dbReference>
<dbReference type="GeneID" id="184247"/>
<dbReference type="KEGG" id="cel:CELE_F09E8.6"/>
<dbReference type="UCSC" id="F09E8.6">
    <property type="organism name" value="c. elegans"/>
</dbReference>
<dbReference type="AGR" id="WB:WBGene00003533"/>
<dbReference type="CTD" id="184247"/>
<dbReference type="WormBase" id="F09E8.6">
    <property type="protein sequence ID" value="CE35854"/>
    <property type="gene ID" value="WBGene00003533"/>
    <property type="gene designation" value="nas-14"/>
</dbReference>
<dbReference type="eggNOG" id="KOG3714">
    <property type="taxonomic scope" value="Eukaryota"/>
</dbReference>
<dbReference type="GeneTree" id="ENSGT00940000154856"/>
<dbReference type="HOGENOM" id="CLU_017286_0_1_1"/>
<dbReference type="InParanoid" id="Q19269"/>
<dbReference type="OMA" id="MTNDQRA"/>
<dbReference type="OrthoDB" id="291007at2759"/>
<dbReference type="PhylomeDB" id="Q19269"/>
<dbReference type="PRO" id="PR:Q19269"/>
<dbReference type="Proteomes" id="UP000001940">
    <property type="component" value="Chromosome IV"/>
</dbReference>
<dbReference type="Bgee" id="WBGene00003533">
    <property type="expression patterns" value="Expressed in pharyngeal muscle cell (C elegans) and 3 other cell types or tissues"/>
</dbReference>
<dbReference type="GO" id="GO:0005576">
    <property type="term" value="C:extracellular region"/>
    <property type="evidence" value="ECO:0007669"/>
    <property type="project" value="UniProtKB-SubCell"/>
</dbReference>
<dbReference type="GO" id="GO:0004222">
    <property type="term" value="F:metalloendopeptidase activity"/>
    <property type="evidence" value="ECO:0000318"/>
    <property type="project" value="GO_Central"/>
</dbReference>
<dbReference type="GO" id="GO:0008270">
    <property type="term" value="F:zinc ion binding"/>
    <property type="evidence" value="ECO:0007669"/>
    <property type="project" value="InterPro"/>
</dbReference>
<dbReference type="GO" id="GO:0006508">
    <property type="term" value="P:proteolysis"/>
    <property type="evidence" value="ECO:0007669"/>
    <property type="project" value="UniProtKB-KW"/>
</dbReference>
<dbReference type="CDD" id="cd04280">
    <property type="entry name" value="ZnMc_astacin_like"/>
    <property type="match status" value="1"/>
</dbReference>
<dbReference type="FunFam" id="3.40.390.10:FF:000042">
    <property type="entry name" value="Metalloendopeptidase"/>
    <property type="match status" value="1"/>
</dbReference>
<dbReference type="Gene3D" id="1.10.10.1940">
    <property type="match status" value="1"/>
</dbReference>
<dbReference type="Gene3D" id="3.40.390.10">
    <property type="entry name" value="Collagenase (Catalytic Domain)"/>
    <property type="match status" value="1"/>
</dbReference>
<dbReference type="InterPro" id="IPR034035">
    <property type="entry name" value="Astacin-like_dom"/>
</dbReference>
<dbReference type="InterPro" id="IPR024079">
    <property type="entry name" value="MetalloPept_cat_dom_sf"/>
</dbReference>
<dbReference type="InterPro" id="IPR001506">
    <property type="entry name" value="Peptidase_M12A"/>
</dbReference>
<dbReference type="InterPro" id="IPR006026">
    <property type="entry name" value="Peptidase_Metallo"/>
</dbReference>
<dbReference type="InterPro" id="IPR003582">
    <property type="entry name" value="ShKT_dom"/>
</dbReference>
<dbReference type="PANTHER" id="PTHR10127">
    <property type="entry name" value="DISCOIDIN, CUB, EGF, LAMININ , AND ZINC METALLOPROTEASE DOMAIN CONTAINING"/>
    <property type="match status" value="1"/>
</dbReference>
<dbReference type="PANTHER" id="PTHR10127:SF780">
    <property type="entry name" value="METALLOENDOPEPTIDASE"/>
    <property type="match status" value="1"/>
</dbReference>
<dbReference type="Pfam" id="PF01400">
    <property type="entry name" value="Astacin"/>
    <property type="match status" value="1"/>
</dbReference>
<dbReference type="Pfam" id="PF01549">
    <property type="entry name" value="ShK"/>
    <property type="match status" value="2"/>
</dbReference>
<dbReference type="PRINTS" id="PR00480">
    <property type="entry name" value="ASTACIN"/>
</dbReference>
<dbReference type="SMART" id="SM00254">
    <property type="entry name" value="ShKT"/>
    <property type="match status" value="2"/>
</dbReference>
<dbReference type="SMART" id="SM00235">
    <property type="entry name" value="ZnMc"/>
    <property type="match status" value="1"/>
</dbReference>
<dbReference type="SUPFAM" id="SSF55486">
    <property type="entry name" value="Metalloproteases ('zincins'), catalytic domain"/>
    <property type="match status" value="1"/>
</dbReference>
<dbReference type="PROSITE" id="PS51864">
    <property type="entry name" value="ASTACIN"/>
    <property type="match status" value="1"/>
</dbReference>
<dbReference type="PROSITE" id="PS51670">
    <property type="entry name" value="SHKT"/>
    <property type="match status" value="2"/>
</dbReference>
<dbReference type="PROSITE" id="PS00142">
    <property type="entry name" value="ZINC_PROTEASE"/>
    <property type="match status" value="1"/>
</dbReference>
<gene>
    <name type="primary">nas-14</name>
    <name type="ORF">F09E8.6</name>
</gene>
<protein>
    <recommendedName>
        <fullName>Zinc metalloproteinase nas-14</fullName>
        <ecNumber evidence="1">3.4.24.-</ecNumber>
    </recommendedName>
    <alternativeName>
        <fullName>Nematode astacin 14</fullName>
    </alternativeName>
</protein>
<reference key="1">
    <citation type="journal article" date="1998" name="Science">
        <title>Genome sequence of the nematode C. elegans: a platform for investigating biology.</title>
        <authorList>
            <consortium name="The C. elegans sequencing consortium"/>
        </authorList>
    </citation>
    <scope>NUCLEOTIDE SEQUENCE [LARGE SCALE GENOMIC DNA]</scope>
    <source>
        <strain>Bristol N2</strain>
    </source>
</reference>
<reference key="2">
    <citation type="journal article" date="2003" name="Eur. J. Biochem.">
        <title>The astacin protein family in Caenorhabditis elegans.</title>
        <authorList>
            <person name="Moehrlen F."/>
            <person name="Hutter H."/>
            <person name="Zwilling R."/>
        </authorList>
    </citation>
    <scope>NUCLEOTIDE SEQUENCE [MRNA] OF 217-355</scope>
    <scope>NOMENCLATURE</scope>
    <source>
        <strain>Bristol N2</strain>
    </source>
</reference>
<reference key="3">
    <citation type="journal article" date="2010" name="BMC Dev. Biol.">
        <title>Characterization of the astacin family of metalloproteases in C. elegans.</title>
        <authorList>
            <person name="Park J.O."/>
            <person name="Pan J."/>
            <person name="Moehrlen F."/>
            <person name="Schupp M.O."/>
            <person name="Johnsen R."/>
            <person name="Baillie D.L."/>
            <person name="Zapf R."/>
            <person name="Moerman D.G."/>
            <person name="Hutter H."/>
        </authorList>
    </citation>
    <scope>TISSUE SPECIFICITY</scope>
</reference>
<sequence>MRLLYSLFHCSAFLVGFTLSVGVLPIPNEHAASIKAKFDDYAEHYLLPEDFHNAETAPVKKPTDAEIESMQNSLLFEGDIMGVPEIEKSDILKRLRDDPLLDEDEIFRKPFHSALNLVTYPDKLWPEGQVPYMLEEGMTNDQRTAIAQAFDEYKTKTCVRFVPKTDDDFDYIYVKRNVAFGCSSYVGRAGGNQTVSLEVDKCFSKGIIAHELMHALGFFHEHSRTDRDDFVDINEDNIRPGMMRNFEKYPRKIIDSLGMPYDYESVMHYHKLAFSRNGKPTIIPKDNEADVGQRYKLSEMDSKKVNKLYQCGEYSKTSSTTTTTTTTTTTTTTEEPTTTTEVEEKPKDKKVSSTTTTTKKPTTTTTTTPKPVERSRNKKCEDLNAHCGMWEQLGHCQHSVKYMAHYCRKACNLCEVEVTTTTTTTPKPVPRNKEKENKSASSTTRGTSTATSTTPKTTTTTTSAPKEKCEDKNLFCSYWAKIGECNSESKFMKIFCKASCGKC</sequence>
<keyword id="KW-1015">Disulfide bond</keyword>
<keyword id="KW-0325">Glycoprotein</keyword>
<keyword id="KW-0378">Hydrolase</keyword>
<keyword id="KW-0479">Metal-binding</keyword>
<keyword id="KW-0482">Metalloprotease</keyword>
<keyword id="KW-0645">Protease</keyword>
<keyword id="KW-1185">Reference proteome</keyword>
<keyword id="KW-0677">Repeat</keyword>
<keyword id="KW-0964">Secreted</keyword>
<keyword id="KW-0732">Signal</keyword>
<keyword id="KW-0862">Zinc</keyword>
<keyword id="KW-0865">Zymogen</keyword>